<accession>A5N3V4</accession>
<organism>
    <name type="scientific">Clostridium kluyveri (strain ATCC 8527 / DSM 555 / NBRC 12016 / NCIMB 10680 / K1)</name>
    <dbReference type="NCBI Taxonomy" id="431943"/>
    <lineage>
        <taxon>Bacteria</taxon>
        <taxon>Bacillati</taxon>
        <taxon>Bacillota</taxon>
        <taxon>Clostridia</taxon>
        <taxon>Eubacteriales</taxon>
        <taxon>Clostridiaceae</taxon>
        <taxon>Clostridium</taxon>
    </lineage>
</organism>
<name>SFSA_CLOK5</name>
<dbReference type="EMBL" id="CP000673">
    <property type="protein sequence ID" value="EDK35800.1"/>
    <property type="molecule type" value="Genomic_DNA"/>
</dbReference>
<dbReference type="RefSeq" id="WP_012104135.1">
    <property type="nucleotide sequence ID" value="NC_009706.1"/>
</dbReference>
<dbReference type="SMR" id="A5N3V4"/>
<dbReference type="STRING" id="431943.CKL_3822"/>
<dbReference type="KEGG" id="ckl:CKL_3822"/>
<dbReference type="eggNOG" id="COG1489">
    <property type="taxonomic scope" value="Bacteria"/>
</dbReference>
<dbReference type="HOGENOM" id="CLU_052299_1_0_9"/>
<dbReference type="Proteomes" id="UP000002411">
    <property type="component" value="Chromosome"/>
</dbReference>
<dbReference type="GO" id="GO:0003677">
    <property type="term" value="F:DNA binding"/>
    <property type="evidence" value="ECO:0007669"/>
    <property type="project" value="InterPro"/>
</dbReference>
<dbReference type="CDD" id="cd22359">
    <property type="entry name" value="SfsA-like_bacterial"/>
    <property type="match status" value="1"/>
</dbReference>
<dbReference type="FunFam" id="2.40.50.580:FF:000002">
    <property type="entry name" value="Sugar fermentation stimulation protein homolog"/>
    <property type="match status" value="1"/>
</dbReference>
<dbReference type="Gene3D" id="2.40.50.580">
    <property type="match status" value="1"/>
</dbReference>
<dbReference type="Gene3D" id="3.40.1350.60">
    <property type="match status" value="1"/>
</dbReference>
<dbReference type="HAMAP" id="MF_00095">
    <property type="entry name" value="SfsA"/>
    <property type="match status" value="1"/>
</dbReference>
<dbReference type="InterPro" id="IPR005224">
    <property type="entry name" value="SfsA"/>
</dbReference>
<dbReference type="InterPro" id="IPR040452">
    <property type="entry name" value="SfsA_C"/>
</dbReference>
<dbReference type="InterPro" id="IPR041465">
    <property type="entry name" value="SfsA_N"/>
</dbReference>
<dbReference type="NCBIfam" id="TIGR00230">
    <property type="entry name" value="sfsA"/>
    <property type="match status" value="1"/>
</dbReference>
<dbReference type="PANTHER" id="PTHR30545">
    <property type="entry name" value="SUGAR FERMENTATION STIMULATION PROTEIN A"/>
    <property type="match status" value="1"/>
</dbReference>
<dbReference type="PANTHER" id="PTHR30545:SF2">
    <property type="entry name" value="SUGAR FERMENTATION STIMULATION PROTEIN A"/>
    <property type="match status" value="1"/>
</dbReference>
<dbReference type="Pfam" id="PF03749">
    <property type="entry name" value="SfsA"/>
    <property type="match status" value="1"/>
</dbReference>
<dbReference type="Pfam" id="PF17746">
    <property type="entry name" value="SfsA_N"/>
    <property type="match status" value="1"/>
</dbReference>
<keyword id="KW-1185">Reference proteome</keyword>
<evidence type="ECO:0000255" key="1">
    <source>
        <dbReference type="HAMAP-Rule" id="MF_00095"/>
    </source>
</evidence>
<protein>
    <recommendedName>
        <fullName evidence="1">Sugar fermentation stimulation protein homolog</fullName>
    </recommendedName>
</protein>
<proteinExistence type="inferred from homology"/>
<sequence>MIFHKNIVKAEFIRRPNRFQAYVKLNGSEVMVHVPNTGRCREILLPETTILLREENGINRKTKYDLIAGYKENKLINIDSQIPNKVVEEALENRKISYFTKYNKIEREKTFGNSRFDFKLSGDENLKCYVEVKGVTLEKEGVAMFPDAPTERGRKHLLELIEVKKSGMDAAVLFLIQMKDVKYFRPHDEMDKKFGEALRHAKENYVQVVAYDCDVGENFIILRDEIKVQL</sequence>
<gene>
    <name evidence="1" type="primary">sfsA</name>
    <name type="ordered locus">CKL_3822</name>
</gene>
<reference key="1">
    <citation type="journal article" date="2008" name="Proc. Natl. Acad. Sci. U.S.A.">
        <title>The genome of Clostridium kluyveri, a strict anaerobe with unique metabolic features.</title>
        <authorList>
            <person name="Seedorf H."/>
            <person name="Fricke W.F."/>
            <person name="Veith B."/>
            <person name="Brueggemann H."/>
            <person name="Liesegang H."/>
            <person name="Strittmatter A."/>
            <person name="Miethke M."/>
            <person name="Buckel W."/>
            <person name="Hinderberger J."/>
            <person name="Li F."/>
            <person name="Hagemeier C."/>
            <person name="Thauer R.K."/>
            <person name="Gottschalk G."/>
        </authorList>
    </citation>
    <scope>NUCLEOTIDE SEQUENCE [LARGE SCALE GENOMIC DNA]</scope>
    <source>
        <strain>ATCC 8527 / DSM 555 / NBRC 12016 / NCIMB 10680 / K1</strain>
    </source>
</reference>
<comment type="similarity">
    <text evidence="1">Belongs to the SfsA family.</text>
</comment>
<feature type="chain" id="PRO_1000075538" description="Sugar fermentation stimulation protein homolog">
    <location>
        <begin position="1"/>
        <end position="230"/>
    </location>
</feature>